<sequence length="871" mass="95193">MGRLRVLLLWLAWWLSQAGIAHGAGSVRLAGGLTLGGLFPVHARGAAGRACGTLKKEQGVHRLEAMLYALDRINADPELLPGVRLGARLLDTCSRDTYALEQALSFVQALIRGRGDGEEASVRCPGGVPPLRAAPPERVVAVVGASASSVSIMVANVLRLFAIPQISYASTAPELSDSTRYDFFSRVVPPDSYQAQAMVDIVRALGWNYVSTLASEGNYGESGVEAFVQISREAGGVCIAQSIKIPREPKPGEFHKVIRRLMETPNARGIIIFANEDDIRRVLEATRQANLTGHFLWVGSDSWGSKISPILNLEEEAVGAITILPKRASIDGFDQYFMTRSLENNRRNIWFAEFWEENFNCKLTSSGGQSDDSTRKCTGEERIGQDSTYEQEGKVQFVIDAVYAIAHALHSMHQALCPGHTGLCPAMEPTDGRTLLHYIRAVRFNGSAGTPVMFNENGDAPGRYDIFQYQATNGSASSGGYQAVGQWAEALRLDMEALQWSGDPHEVPPSQCSLPCGPGERKKMVKGVPCCWHCEACDGYRFQVDEFTCEACPGHMRPTPNHTGCRPTPVVRLTWSSPWAALPLLLAVLGIMATTTIIATFMRHNDTPIVRASGRELSYVLLTGIFLIYAITFLMVAEPCAAVCASRRLLLGLGTTLSYSALLTKTNRIYRIFEQGKRSVTPPPFISPTSQLVITFGLTSLQVVGVIAWLGAQPPHSVIDYEEQRTVDPEQARGVLKCDMSDLSLIGCLGYSLLLMVTCTVYAIKARGVPETFNEAKPIGFTMYTTCIIWLAFVPIFFGTAQSAEKIYIQTTTLTVSLSLSASVSLGMLYVPKTYVILFHPEQNVQKRKRSLKKTSTMAAPPKSENSEDAK</sequence>
<dbReference type="EMBL" id="AL627215">
    <property type="status" value="NOT_ANNOTATED_CDS"/>
    <property type="molecule type" value="Genomic_DNA"/>
</dbReference>
<dbReference type="CCDS" id="CCDS48785.1"/>
<dbReference type="RefSeq" id="NP_775548.2">
    <property type="nucleotide sequence ID" value="NM_173372.2"/>
</dbReference>
<dbReference type="RefSeq" id="XP_006532024.1">
    <property type="nucleotide sequence ID" value="XM_006531961.2"/>
</dbReference>
<dbReference type="RefSeq" id="XP_036012112.1">
    <property type="nucleotide sequence ID" value="XM_036156219.1"/>
</dbReference>
<dbReference type="SMR" id="Q5NCH9"/>
<dbReference type="BioGRID" id="223810">
    <property type="interactions" value="1"/>
</dbReference>
<dbReference type="CORUM" id="Q5NCH9"/>
<dbReference type="FunCoup" id="Q5NCH9">
    <property type="interactions" value="525"/>
</dbReference>
<dbReference type="IntAct" id="Q5NCH9">
    <property type="interactions" value="1"/>
</dbReference>
<dbReference type="STRING" id="10090.ENSMUSP00000130728"/>
<dbReference type="GlyCosmos" id="Q5NCH9">
    <property type="glycosylation" value="4 sites, No reported glycans"/>
</dbReference>
<dbReference type="GlyGen" id="Q5NCH9">
    <property type="glycosylation" value="5 sites, 1 N-linked glycan (1 site)"/>
</dbReference>
<dbReference type="iPTMnet" id="Q5NCH9"/>
<dbReference type="PhosphoSitePlus" id="Q5NCH9"/>
<dbReference type="PaxDb" id="10090-ENSMUSP00000130728"/>
<dbReference type="ProteomicsDB" id="271171"/>
<dbReference type="Antibodypedia" id="17632">
    <property type="antibodies" value="354 antibodies from 32 providers"/>
</dbReference>
<dbReference type="DNASU" id="108072"/>
<dbReference type="Ensembl" id="ENSMUST00000000631.8">
    <property type="protein sequence ID" value="ENSMUSP00000000631.8"/>
    <property type="gene ID" value="ENSMUSG00000000617.15"/>
</dbReference>
<dbReference type="Ensembl" id="ENSMUST00000171427.8">
    <property type="protein sequence ID" value="ENSMUSP00000130728.2"/>
    <property type="gene ID" value="ENSMUSG00000000617.15"/>
</dbReference>
<dbReference type="GeneID" id="108072"/>
<dbReference type="KEGG" id="mmu:108072"/>
<dbReference type="UCSC" id="uc007isu.2">
    <property type="organism name" value="mouse"/>
</dbReference>
<dbReference type="AGR" id="MGI:1351343"/>
<dbReference type="CTD" id="2916"/>
<dbReference type="MGI" id="MGI:1351343">
    <property type="gene designation" value="Grm6"/>
</dbReference>
<dbReference type="VEuPathDB" id="HostDB:ENSMUSG00000000617"/>
<dbReference type="eggNOG" id="KOG1056">
    <property type="taxonomic scope" value="Eukaryota"/>
</dbReference>
<dbReference type="GeneTree" id="ENSGT01030000234648"/>
<dbReference type="HOGENOM" id="CLU_005389_0_0_1"/>
<dbReference type="InParanoid" id="Q5NCH9"/>
<dbReference type="OMA" id="CCPTPII"/>
<dbReference type="OrthoDB" id="425344at2759"/>
<dbReference type="PhylomeDB" id="Q5NCH9"/>
<dbReference type="TreeFam" id="TF313240"/>
<dbReference type="Reactome" id="R-MMU-418594">
    <property type="pathway name" value="G alpha (i) signalling events"/>
</dbReference>
<dbReference type="Reactome" id="R-MMU-420499">
    <property type="pathway name" value="Class C/3 (Metabotropic glutamate/pheromone receptors)"/>
</dbReference>
<dbReference type="BioGRID-ORCS" id="108072">
    <property type="hits" value="4 hits in 78 CRISPR screens"/>
</dbReference>
<dbReference type="ChiTaRS" id="Grm6">
    <property type="organism name" value="mouse"/>
</dbReference>
<dbReference type="PRO" id="PR:Q5NCH9"/>
<dbReference type="Proteomes" id="UP000000589">
    <property type="component" value="Chromosome 11"/>
</dbReference>
<dbReference type="RNAct" id="Q5NCH9">
    <property type="molecule type" value="protein"/>
</dbReference>
<dbReference type="Bgee" id="ENSMUSG00000000617">
    <property type="expression patterns" value="Expressed in retinal neural layer and 7 other cell types or tissues"/>
</dbReference>
<dbReference type="GO" id="GO:0051286">
    <property type="term" value="C:cell tip"/>
    <property type="evidence" value="ECO:0000314"/>
    <property type="project" value="MGI"/>
</dbReference>
<dbReference type="GO" id="GO:0030425">
    <property type="term" value="C:dendrite"/>
    <property type="evidence" value="ECO:0000314"/>
    <property type="project" value="MGI"/>
</dbReference>
<dbReference type="GO" id="GO:0005789">
    <property type="term" value="C:endoplasmic reticulum membrane"/>
    <property type="evidence" value="ECO:0000250"/>
    <property type="project" value="UniProtKB"/>
</dbReference>
<dbReference type="GO" id="GO:0000139">
    <property type="term" value="C:Golgi membrane"/>
    <property type="evidence" value="ECO:0000250"/>
    <property type="project" value="UniProtKB"/>
</dbReference>
<dbReference type="GO" id="GO:0035841">
    <property type="term" value="C:new growing cell tip"/>
    <property type="evidence" value="ECO:0000314"/>
    <property type="project" value="MGI"/>
</dbReference>
<dbReference type="GO" id="GO:0005886">
    <property type="term" value="C:plasma membrane"/>
    <property type="evidence" value="ECO:0000250"/>
    <property type="project" value="UniProtKB"/>
</dbReference>
<dbReference type="GO" id="GO:0045211">
    <property type="term" value="C:postsynaptic membrane"/>
    <property type="evidence" value="ECO:0000304"/>
    <property type="project" value="UniProtKB"/>
</dbReference>
<dbReference type="GO" id="GO:0008066">
    <property type="term" value="F:glutamate receptor activity"/>
    <property type="evidence" value="ECO:0000250"/>
    <property type="project" value="UniProtKB"/>
</dbReference>
<dbReference type="GO" id="GO:0001642">
    <property type="term" value="F:group III metabotropic glutamate receptor activity"/>
    <property type="evidence" value="ECO:0000304"/>
    <property type="project" value="MGI"/>
</dbReference>
<dbReference type="GO" id="GO:0042803">
    <property type="term" value="F:protein homodimerization activity"/>
    <property type="evidence" value="ECO:0007669"/>
    <property type="project" value="Ensembl"/>
</dbReference>
<dbReference type="GO" id="GO:0007268">
    <property type="term" value="P:chemical synaptic transmission"/>
    <property type="evidence" value="ECO:0007669"/>
    <property type="project" value="Ensembl"/>
</dbReference>
<dbReference type="GO" id="GO:0050908">
    <property type="term" value="P:detection of light stimulus involved in visual perception"/>
    <property type="evidence" value="ECO:0000250"/>
    <property type="project" value="UniProtKB"/>
</dbReference>
<dbReference type="GO" id="GO:0007216">
    <property type="term" value="P:G protein-coupled glutamate receptor signaling pathway"/>
    <property type="evidence" value="ECO:0000250"/>
    <property type="project" value="UniProtKB"/>
</dbReference>
<dbReference type="GO" id="GO:0007186">
    <property type="term" value="P:G protein-coupled receptor signaling pathway"/>
    <property type="evidence" value="ECO:0000304"/>
    <property type="project" value="UniProtKB"/>
</dbReference>
<dbReference type="GO" id="GO:0010467">
    <property type="term" value="P:gene expression"/>
    <property type="evidence" value="ECO:0000315"/>
    <property type="project" value="MGI"/>
</dbReference>
<dbReference type="GO" id="GO:0007626">
    <property type="term" value="P:locomotory behavior"/>
    <property type="evidence" value="ECO:0000315"/>
    <property type="project" value="UniProtKB"/>
</dbReference>
<dbReference type="GO" id="GO:1905665">
    <property type="term" value="P:positive regulation of calcium ion import across plasma membrane"/>
    <property type="evidence" value="ECO:0000250"/>
    <property type="project" value="UniProtKB"/>
</dbReference>
<dbReference type="GO" id="GO:0060041">
    <property type="term" value="P:retina development in camera-type eye"/>
    <property type="evidence" value="ECO:0000315"/>
    <property type="project" value="MGI"/>
</dbReference>
<dbReference type="GO" id="GO:0050953">
    <property type="term" value="P:sensory perception of light stimulus"/>
    <property type="evidence" value="ECO:0000315"/>
    <property type="project" value="UniProtKB"/>
</dbReference>
<dbReference type="GO" id="GO:0007165">
    <property type="term" value="P:signal transduction"/>
    <property type="evidence" value="ECO:0000316"/>
    <property type="project" value="MGI"/>
</dbReference>
<dbReference type="GO" id="GO:0007416">
    <property type="term" value="P:synapse assembly"/>
    <property type="evidence" value="ECO:0000315"/>
    <property type="project" value="MGI"/>
</dbReference>
<dbReference type="GO" id="GO:0007601">
    <property type="term" value="P:visual perception"/>
    <property type="evidence" value="ECO:0000304"/>
    <property type="project" value="UniProtKB"/>
</dbReference>
<dbReference type="CDD" id="cd06376">
    <property type="entry name" value="PBP1_mGluR_groupIII"/>
    <property type="match status" value="1"/>
</dbReference>
<dbReference type="FunFam" id="3.40.50.2300:FF:000009">
    <property type="entry name" value="Glutamate receptor, metabotropic 4"/>
    <property type="match status" value="1"/>
</dbReference>
<dbReference type="FunFam" id="2.10.50.30:FF:000001">
    <property type="entry name" value="metabotropic glutamate receptor 1"/>
    <property type="match status" value="1"/>
</dbReference>
<dbReference type="Gene3D" id="3.40.50.2300">
    <property type="match status" value="2"/>
</dbReference>
<dbReference type="Gene3D" id="2.10.50.30">
    <property type="entry name" value="GPCR, family 3, nine cysteines domain"/>
    <property type="match status" value="1"/>
</dbReference>
<dbReference type="InterPro" id="IPR001828">
    <property type="entry name" value="ANF_lig-bd_rcpt"/>
</dbReference>
<dbReference type="InterPro" id="IPR000337">
    <property type="entry name" value="GPCR_3"/>
</dbReference>
<dbReference type="InterPro" id="IPR011500">
    <property type="entry name" value="GPCR_3_9-Cys_dom"/>
</dbReference>
<dbReference type="InterPro" id="IPR038550">
    <property type="entry name" value="GPCR_3_9-Cys_sf"/>
</dbReference>
<dbReference type="InterPro" id="IPR000112">
    <property type="entry name" value="GPCR_3__mGluR6"/>
</dbReference>
<dbReference type="InterPro" id="IPR017978">
    <property type="entry name" value="GPCR_3_C"/>
</dbReference>
<dbReference type="InterPro" id="IPR017979">
    <property type="entry name" value="GPCR_3_CS"/>
</dbReference>
<dbReference type="InterPro" id="IPR000162">
    <property type="entry name" value="GPCR_3_mtglu_rcpt"/>
</dbReference>
<dbReference type="InterPro" id="IPR050726">
    <property type="entry name" value="mGluR"/>
</dbReference>
<dbReference type="InterPro" id="IPR028082">
    <property type="entry name" value="Peripla_BP_I"/>
</dbReference>
<dbReference type="PANTHER" id="PTHR24060">
    <property type="entry name" value="METABOTROPIC GLUTAMATE RECEPTOR"/>
    <property type="match status" value="1"/>
</dbReference>
<dbReference type="Pfam" id="PF00003">
    <property type="entry name" value="7tm_3"/>
    <property type="match status" value="1"/>
</dbReference>
<dbReference type="Pfam" id="PF01094">
    <property type="entry name" value="ANF_receptor"/>
    <property type="match status" value="1"/>
</dbReference>
<dbReference type="Pfam" id="PF07562">
    <property type="entry name" value="NCD3G"/>
    <property type="match status" value="1"/>
</dbReference>
<dbReference type="PRINTS" id="PR00248">
    <property type="entry name" value="GPCRMGR"/>
</dbReference>
<dbReference type="PRINTS" id="PR01056">
    <property type="entry name" value="MTABOTROPC6R"/>
</dbReference>
<dbReference type="PRINTS" id="PR00593">
    <property type="entry name" value="MTABOTROPICR"/>
</dbReference>
<dbReference type="SUPFAM" id="SSF53822">
    <property type="entry name" value="Periplasmic binding protein-like I"/>
    <property type="match status" value="1"/>
</dbReference>
<dbReference type="PROSITE" id="PS00979">
    <property type="entry name" value="G_PROTEIN_RECEP_F3_1"/>
    <property type="match status" value="1"/>
</dbReference>
<dbReference type="PROSITE" id="PS00980">
    <property type="entry name" value="G_PROTEIN_RECEP_F3_2"/>
    <property type="match status" value="1"/>
</dbReference>
<dbReference type="PROSITE" id="PS00981">
    <property type="entry name" value="G_PROTEIN_RECEP_F3_3"/>
    <property type="match status" value="1"/>
</dbReference>
<dbReference type="PROSITE" id="PS50259">
    <property type="entry name" value="G_PROTEIN_RECEP_F3_4"/>
    <property type="match status" value="1"/>
</dbReference>
<comment type="function">
    <text evidence="1 6 10">G-protein coupled receptor for glutamate. Ligand binding causes a conformation change that triggers signaling via guanine nucleotide-binding proteins (G proteins) and modulates the activity of down-stream effectors, such as adenylate cyclase. Signaling inhibits adenylate cyclase activity (By similarity). Signaling stimulates TRPM1 channel activity and Ca(2+) uptake. Required for normal vision.</text>
</comment>
<comment type="subunit">
    <text evidence="2 7 8">Homodimer (By similarity). Interacts with GPR179 (PubMed:24114537). Interacts with photoreceptor synaptic protein LRIT1 (via its N-terminal extracellular domain) (PubMed:29590622).</text>
</comment>
<comment type="subcellular location">
    <subcellularLocation>
        <location>Cell membrane</location>
        <topology>Multi-pass membrane protein</topology>
    </subcellularLocation>
    <subcellularLocation>
        <location evidence="1">Endoplasmic reticulum membrane</location>
        <topology evidence="1">Multi-pass membrane protein</topology>
    </subcellularLocation>
    <subcellularLocation>
        <location evidence="1">Golgi apparatus membrane</location>
        <topology evidence="1">Multi-pass membrane protein</topology>
    </subcellularLocation>
    <subcellularLocation>
        <location>Cell projection</location>
        <location>Dendrite</location>
    </subcellularLocation>
    <text evidence="1">Subject to trafficking from the endoplasmic reticulum to the Golgi apparatus and then to the cell membrane (By similarity). Detected at dendritic tips of bipolar cells.</text>
</comment>
<comment type="tissue specificity">
    <text evidence="5 9">Detected in the outer plexiform layer in retina (at protein level).</text>
</comment>
<comment type="disruption phenotype">
    <text evidence="6 9 10">Retinal cells from mutant mice display a subtly altered response to cycles of light and darkness, due to a failure of the ON bipolar cells in the retina to become depolarized in response to light. As a consequence, mutant mice display little or no pupillary contraction in adaptation to low light intensity. Besides, they exhibit strongly impaired responses to moving stimuli, and fail to produce a response when the visual constrast is low. Besides, rod bipolar cells from mutant mice lack TRPM1 channel activity.</text>
</comment>
<comment type="similarity">
    <text evidence="11">Belongs to the G-protein coupled receptor 3 family.</text>
</comment>
<proteinExistence type="evidence at protein level"/>
<organism>
    <name type="scientific">Mus musculus</name>
    <name type="common">Mouse</name>
    <dbReference type="NCBI Taxonomy" id="10090"/>
    <lineage>
        <taxon>Eukaryota</taxon>
        <taxon>Metazoa</taxon>
        <taxon>Chordata</taxon>
        <taxon>Craniata</taxon>
        <taxon>Vertebrata</taxon>
        <taxon>Euteleostomi</taxon>
        <taxon>Mammalia</taxon>
        <taxon>Eutheria</taxon>
        <taxon>Euarchontoglires</taxon>
        <taxon>Glires</taxon>
        <taxon>Rodentia</taxon>
        <taxon>Myomorpha</taxon>
        <taxon>Muroidea</taxon>
        <taxon>Muridae</taxon>
        <taxon>Murinae</taxon>
        <taxon>Mus</taxon>
        <taxon>Mus</taxon>
    </lineage>
</organism>
<evidence type="ECO:0000250" key="1"/>
<evidence type="ECO:0000250" key="2">
    <source>
        <dbReference type="UniProtKB" id="O15303"/>
    </source>
</evidence>
<evidence type="ECO:0000255" key="3"/>
<evidence type="ECO:0000256" key="4">
    <source>
        <dbReference type="SAM" id="MobiDB-lite"/>
    </source>
</evidence>
<evidence type="ECO:0000269" key="5">
    <source>
    </source>
</evidence>
<evidence type="ECO:0000269" key="6">
    <source>
    </source>
</evidence>
<evidence type="ECO:0000269" key="7">
    <source>
    </source>
</evidence>
<evidence type="ECO:0000269" key="8">
    <source>
    </source>
</evidence>
<evidence type="ECO:0000269" key="9">
    <source>
    </source>
</evidence>
<evidence type="ECO:0000269" key="10">
    <source>
    </source>
</evidence>
<evidence type="ECO:0000305" key="11"/>
<accession>Q5NCH9</accession>
<feature type="signal peptide" evidence="3">
    <location>
        <begin position="1"/>
        <end position="23"/>
    </location>
</feature>
<feature type="chain" id="PRO_0000012935" description="Metabotropic glutamate receptor 6">
    <location>
        <begin position="24"/>
        <end position="871"/>
    </location>
</feature>
<feature type="topological domain" description="Extracellular" evidence="3">
    <location>
        <begin position="24"/>
        <end position="579"/>
    </location>
</feature>
<feature type="transmembrane region" description="Helical; Name=1" evidence="3">
    <location>
        <begin position="580"/>
        <end position="602"/>
    </location>
</feature>
<feature type="topological domain" description="Cytoplasmic" evidence="3">
    <location>
        <begin position="603"/>
        <end position="616"/>
    </location>
</feature>
<feature type="transmembrane region" description="Helical; Name=2" evidence="3">
    <location>
        <begin position="617"/>
        <end position="637"/>
    </location>
</feature>
<feature type="topological domain" description="Extracellular" evidence="3">
    <location>
        <begin position="638"/>
        <end position="648"/>
    </location>
</feature>
<feature type="transmembrane region" description="Helical; Name=3" evidence="3">
    <location>
        <begin position="649"/>
        <end position="667"/>
    </location>
</feature>
<feature type="topological domain" description="Cytoplasmic" evidence="3">
    <location>
        <begin position="668"/>
        <end position="691"/>
    </location>
</feature>
<feature type="transmembrane region" description="Helical; Name=4" evidence="3">
    <location>
        <begin position="692"/>
        <end position="712"/>
    </location>
</feature>
<feature type="topological domain" description="Extracellular" evidence="3">
    <location>
        <begin position="713"/>
        <end position="742"/>
    </location>
</feature>
<feature type="transmembrane region" description="Helical; Name=5" evidence="3">
    <location>
        <begin position="743"/>
        <end position="764"/>
    </location>
</feature>
<feature type="topological domain" description="Cytoplasmic" evidence="3">
    <location>
        <begin position="765"/>
        <end position="777"/>
    </location>
</feature>
<feature type="transmembrane region" description="Helical; Name=6" evidence="3">
    <location>
        <begin position="778"/>
        <end position="800"/>
    </location>
</feature>
<feature type="topological domain" description="Extracellular" evidence="3">
    <location>
        <begin position="801"/>
        <end position="813"/>
    </location>
</feature>
<feature type="transmembrane region" description="Helical; Name=7" evidence="3">
    <location>
        <begin position="814"/>
        <end position="839"/>
    </location>
</feature>
<feature type="topological domain" description="Cytoplasmic" evidence="3">
    <location>
        <begin position="840"/>
        <end position="871"/>
    </location>
</feature>
<feature type="region of interest" description="Disordered" evidence="4">
    <location>
        <begin position="848"/>
        <end position="871"/>
    </location>
</feature>
<feature type="binding site" evidence="1">
    <location>
        <position position="148"/>
    </location>
    <ligand>
        <name>L-glutamate</name>
        <dbReference type="ChEBI" id="CHEBI:29985"/>
    </ligand>
</feature>
<feature type="binding site" evidence="1">
    <location>
        <begin position="169"/>
        <end position="171"/>
    </location>
    <ligand>
        <name>L-glutamate</name>
        <dbReference type="ChEBI" id="CHEBI:29985"/>
    </ligand>
</feature>
<feature type="binding site" evidence="1">
    <location>
        <position position="219"/>
    </location>
    <ligand>
        <name>L-glutamate</name>
        <dbReference type="ChEBI" id="CHEBI:29985"/>
    </ligand>
</feature>
<feature type="binding site" evidence="1">
    <location>
        <position position="301"/>
    </location>
    <ligand>
        <name>L-glutamate</name>
        <dbReference type="ChEBI" id="CHEBI:29985"/>
    </ligand>
</feature>
<feature type="binding site" evidence="1">
    <location>
        <position position="394"/>
    </location>
    <ligand>
        <name>L-glutamate</name>
        <dbReference type="ChEBI" id="CHEBI:29985"/>
    </ligand>
</feature>
<feature type="glycosylation site" description="N-linked (GlcNAc...) asparagine" evidence="3">
    <location>
        <position position="290"/>
    </location>
</feature>
<feature type="glycosylation site" description="N-linked (GlcNAc...) asparagine" evidence="3">
    <location>
        <position position="445"/>
    </location>
</feature>
<feature type="glycosylation site" description="N-linked (GlcNAc...) asparagine" evidence="3">
    <location>
        <position position="473"/>
    </location>
</feature>
<feature type="glycosylation site" description="N-linked (GlcNAc...) asparagine" evidence="3">
    <location>
        <position position="561"/>
    </location>
</feature>
<feature type="disulfide bond" evidence="1">
    <location>
        <begin position="51"/>
        <end position="93"/>
    </location>
</feature>
<feature type="disulfide bond" evidence="1">
    <location>
        <begin position="238"/>
        <end position="530"/>
    </location>
</feature>
<feature type="disulfide bond" evidence="1">
    <location>
        <begin position="361"/>
        <end position="377"/>
    </location>
</feature>
<feature type="disulfide bond" evidence="1">
    <location>
        <begin position="417"/>
        <end position="424"/>
    </location>
</feature>
<feature type="disulfide bond" evidence="1">
    <location>
        <begin position="512"/>
        <end position="531"/>
    </location>
</feature>
<feature type="disulfide bond" evidence="1">
    <location>
        <begin position="516"/>
        <end position="534"/>
    </location>
</feature>
<feature type="disulfide bond" evidence="1">
    <location>
        <begin position="537"/>
        <end position="549"/>
    </location>
</feature>
<feature type="disulfide bond" evidence="1">
    <location>
        <begin position="552"/>
        <end position="565"/>
    </location>
</feature>
<name>GRM6_MOUSE</name>
<reference key="1">
    <citation type="journal article" date="2009" name="PLoS Biol.">
        <title>Lineage-specific biology revealed by a finished genome assembly of the mouse.</title>
        <authorList>
            <person name="Church D.M."/>
            <person name="Goodstadt L."/>
            <person name="Hillier L.W."/>
            <person name="Zody M.C."/>
            <person name="Goldstein S."/>
            <person name="She X."/>
            <person name="Bult C.J."/>
            <person name="Agarwala R."/>
            <person name="Cherry J.L."/>
            <person name="DiCuccio M."/>
            <person name="Hlavina W."/>
            <person name="Kapustin Y."/>
            <person name="Meric P."/>
            <person name="Maglott D."/>
            <person name="Birtle Z."/>
            <person name="Marques A.C."/>
            <person name="Graves T."/>
            <person name="Zhou S."/>
            <person name="Teague B."/>
            <person name="Potamousis K."/>
            <person name="Churas C."/>
            <person name="Place M."/>
            <person name="Herschleb J."/>
            <person name="Runnheim R."/>
            <person name="Forrest D."/>
            <person name="Amos-Landgraf J."/>
            <person name="Schwartz D.C."/>
            <person name="Cheng Z."/>
            <person name="Lindblad-Toh K."/>
            <person name="Eichler E.E."/>
            <person name="Ponting C.P."/>
        </authorList>
    </citation>
    <scope>NUCLEOTIDE SEQUENCE [LARGE SCALE GENOMIC DNA]</scope>
    <source>
        <strain>C57BL/6J</strain>
    </source>
</reference>
<reference key="2">
    <citation type="journal article" date="1995" name="Cell">
        <title>Specific deficit of the ON response in visual transmission by targeted disruption of the mGluR6 gene.</title>
        <authorList>
            <person name="Masu M."/>
            <person name="Iwakabe H."/>
            <person name="Tagawa Y."/>
            <person name="Miyoshi T."/>
            <person name="Yamashita M."/>
            <person name="Fukuda Y."/>
            <person name="Sasaki H."/>
            <person name="Hiroi K."/>
            <person name="Nakamura Y."/>
            <person name="Shigemoto R."/>
            <person name="Takada M."/>
            <person name="Nakamura K."/>
            <person name="Nakao K."/>
            <person name="Katsuki M."/>
            <person name="Nakanishi S."/>
        </authorList>
    </citation>
    <scope>DISRUPTION PHENOTYPE</scope>
    <scope>TISSUE SPECIFICITY</scope>
</reference>
<reference key="3">
    <citation type="journal article" date="1997" name="Neuropharmacology">
        <title>Impairment of pupillary responses and optokinetic nystagmus in the mGluR6-deficient mouse.</title>
        <authorList>
            <person name="Iwakabe H."/>
            <person name="Katsuura G."/>
            <person name="Ishibashi C."/>
            <person name="Nakanishi S."/>
        </authorList>
    </citation>
    <scope>DISRUPTION PHENOTYPE</scope>
    <scope>FUNCTION</scope>
</reference>
<reference key="4">
    <citation type="journal article" date="2007" name="Eur. J. Neurosci.">
        <title>Gbeta5-RGS complexes co-localize with mGluR6 in retinal ON-bipolar cells.</title>
        <authorList>
            <person name="Morgans C.W."/>
            <person name="Wensel T.G."/>
            <person name="Brown R.L."/>
            <person name="Perez-Leon J.A."/>
            <person name="Bearnot B."/>
            <person name="Duvoisin R.M."/>
        </authorList>
    </citation>
    <scope>SUBCELLULAR LOCATION</scope>
    <scope>TISSUE SPECIFICITY</scope>
</reference>
<reference key="5">
    <citation type="journal article" date="2009" name="Invest. Ophthalmol. Vis. Sci.">
        <title>Effects of presynaptic mutations on a postsynaptic Cacna1s calcium channel colocalized with mGluR6 at mouse photoreceptor ribbon synapses.</title>
        <authorList>
            <person name="Specht D."/>
            <person name="Wu S.B."/>
            <person name="Turner P."/>
            <person name="Dearden P."/>
            <person name="Koentgen F."/>
            <person name="Wolfrum U."/>
            <person name="Maw M."/>
            <person name="Brandstatter J.H."/>
            <person name="tom Dieck S."/>
        </authorList>
    </citation>
    <scope>SUBCELLULAR LOCATION</scope>
</reference>
<reference key="6">
    <citation type="journal article" date="2012" name="J. Neurophysiol.">
        <title>mGluR6 deletion renders the TRPM1 channel in retina inactive.</title>
        <authorList>
            <person name="Xu Y."/>
            <person name="Dhingra A."/>
            <person name="Fina M.E."/>
            <person name="Koike C."/>
            <person name="Furukawa T."/>
            <person name="Vardi N."/>
        </authorList>
    </citation>
    <scope>DISRUPTION PHENOTYPE</scope>
    <scope>FUNCTION</scope>
</reference>
<reference key="7">
    <citation type="journal article" date="2013" name="Invest. Ophthalmol. Vis. Sci.">
        <title>Orphan receptor GPR179 forms macromolecular complexes with components of metabotropic signaling cascade in retina ON-bipolar neurons.</title>
        <authorList>
            <person name="Orlandi C."/>
            <person name="Cao Y."/>
            <person name="Martemyanov K.A."/>
        </authorList>
    </citation>
    <scope>INTERACTION WITH GPR179</scope>
</reference>
<reference key="8">
    <citation type="journal article" date="2018" name="Cell Rep.">
        <title>Lrit1, a Retinal Transmembrane Protein, Regulates Selective Synapse Formation in Cone Photoreceptor Cells and Visual Acuity.</title>
        <authorList>
            <person name="Ueno A."/>
            <person name="Omori Y."/>
            <person name="Sugita Y."/>
            <person name="Watanabe S."/>
            <person name="Chaya T."/>
            <person name="Kozuka T."/>
            <person name="Kon T."/>
            <person name="Yoshida S."/>
            <person name="Matsushita K."/>
            <person name="Kuwahara R."/>
            <person name="Kajimura N."/>
            <person name="Okada Y."/>
            <person name="Furukawa T."/>
        </authorList>
    </citation>
    <scope>INTERACTION WITH LRIT1</scope>
</reference>
<gene>
    <name type="primary">Grm6</name>
    <name type="synonym">Gprc1f</name>
    <name type="synonym">Mglur6</name>
</gene>
<protein>
    <recommendedName>
        <fullName>Metabotropic glutamate receptor 6</fullName>
        <shortName>mGluR6</shortName>
    </recommendedName>
</protein>
<keyword id="KW-1003">Cell membrane</keyword>
<keyword id="KW-0966">Cell projection</keyword>
<keyword id="KW-1015">Disulfide bond</keyword>
<keyword id="KW-0256">Endoplasmic reticulum</keyword>
<keyword id="KW-0297">G-protein coupled receptor</keyword>
<keyword id="KW-0325">Glycoprotein</keyword>
<keyword id="KW-0333">Golgi apparatus</keyword>
<keyword id="KW-0472">Membrane</keyword>
<keyword id="KW-0675">Receptor</keyword>
<keyword id="KW-1185">Reference proteome</keyword>
<keyword id="KW-0716">Sensory transduction</keyword>
<keyword id="KW-0732">Signal</keyword>
<keyword id="KW-0807">Transducer</keyword>
<keyword id="KW-0812">Transmembrane</keyword>
<keyword id="KW-1133">Transmembrane helix</keyword>
<keyword id="KW-0844">Vision</keyword>